<name>KDSB_SHEFN</name>
<proteinExistence type="inferred from homology"/>
<comment type="function">
    <text evidence="1">Activates KDO8N (a required 8-carbon sugar) for incorporation into bacterial lipopolysaccharide in the Shewanella genus.</text>
</comment>
<comment type="catalytic activity">
    <reaction evidence="1">
        <text>8-amino-3,8-dideoxy-alpha-D-manno-octulosonate + CTP = CMP-8-amino-3,8-dideoxy-alpha-D-manno-oct-2-ulosonate + diphosphate</text>
        <dbReference type="Rhea" id="RHEA:49284"/>
        <dbReference type="ChEBI" id="CHEBI:33019"/>
        <dbReference type="ChEBI" id="CHEBI:37563"/>
        <dbReference type="ChEBI" id="CHEBI:87091"/>
        <dbReference type="ChEBI" id="CHEBI:91089"/>
        <dbReference type="EC" id="2.7.7.90"/>
    </reaction>
</comment>
<comment type="pathway">
    <text evidence="1">Bacterial outer membrane biogenesis; lipopolysaccharide biosynthesis.</text>
</comment>
<comment type="subcellular location">
    <subcellularLocation>
        <location evidence="1">Cytoplasm</location>
    </subcellularLocation>
</comment>
<comment type="similarity">
    <text evidence="1">Belongs to the KdsB family.</text>
</comment>
<sequence length="245" mass="27521">MKVTLLIPARYGSSRFPGKPLAPINGKPMIQHVYERASLAKGLDSIYVATDDDRIKDAVESFGGKVVMTSPDAASGTDRINDAIALLGLNDDDLVINLQGDQPLIDPISIEQIISLFERHPGEFEMATLGFEIVDKRELDDPMHVKMVFDNDHNALYFSRSRIPFGRDTNDYPVYKHLGVYAYTKRFVNAFAKLPLGRLEDLEKLEQLRALEYGHKIKIAISAFDSPEVDTPEDIRKCELRLAVD</sequence>
<protein>
    <recommendedName>
        <fullName evidence="1">8-amino-3,8-dideoxy-manno-octulosonate cytidylyltransferase</fullName>
        <ecNumber evidence="1">2.7.7.90</ecNumber>
    </recommendedName>
    <alternativeName>
        <fullName evidence="1">CMP-8-amino-3,8-dideoxy-manno-octulosonate synthase</fullName>
    </alternativeName>
</protein>
<organism>
    <name type="scientific">Shewanella frigidimarina (strain NCIMB 400)</name>
    <dbReference type="NCBI Taxonomy" id="318167"/>
    <lineage>
        <taxon>Bacteria</taxon>
        <taxon>Pseudomonadati</taxon>
        <taxon>Pseudomonadota</taxon>
        <taxon>Gammaproteobacteria</taxon>
        <taxon>Alteromonadales</taxon>
        <taxon>Shewanellaceae</taxon>
        <taxon>Shewanella</taxon>
    </lineage>
</organism>
<evidence type="ECO:0000255" key="1">
    <source>
        <dbReference type="HAMAP-Rule" id="MF_00057"/>
    </source>
</evidence>
<feature type="chain" id="PRO_0000370149" description="8-amino-3,8-dideoxy-manno-octulosonate cytidylyltransferase">
    <location>
        <begin position="1"/>
        <end position="245"/>
    </location>
</feature>
<accession>Q083F6</accession>
<keyword id="KW-0963">Cytoplasm</keyword>
<keyword id="KW-0448">Lipopolysaccharide biosynthesis</keyword>
<keyword id="KW-0548">Nucleotidyltransferase</keyword>
<keyword id="KW-1185">Reference proteome</keyword>
<keyword id="KW-0808">Transferase</keyword>
<reference key="1">
    <citation type="submission" date="2006-08" db="EMBL/GenBank/DDBJ databases">
        <title>Complete sequence of Shewanella frigidimarina NCIMB 400.</title>
        <authorList>
            <consortium name="US DOE Joint Genome Institute"/>
            <person name="Copeland A."/>
            <person name="Lucas S."/>
            <person name="Lapidus A."/>
            <person name="Barry K."/>
            <person name="Detter J.C."/>
            <person name="Glavina del Rio T."/>
            <person name="Hammon N."/>
            <person name="Israni S."/>
            <person name="Dalin E."/>
            <person name="Tice H."/>
            <person name="Pitluck S."/>
            <person name="Fredrickson J.K."/>
            <person name="Kolker E."/>
            <person name="McCuel L.A."/>
            <person name="DiChristina T."/>
            <person name="Nealson K.H."/>
            <person name="Newman D."/>
            <person name="Tiedje J.M."/>
            <person name="Zhou J."/>
            <person name="Romine M.F."/>
            <person name="Culley D.E."/>
            <person name="Serres M."/>
            <person name="Chertkov O."/>
            <person name="Brettin T."/>
            <person name="Bruce D."/>
            <person name="Han C."/>
            <person name="Tapia R."/>
            <person name="Gilna P."/>
            <person name="Schmutz J."/>
            <person name="Larimer F."/>
            <person name="Land M."/>
            <person name="Hauser L."/>
            <person name="Kyrpides N."/>
            <person name="Mikhailova N."/>
            <person name="Richardson P."/>
        </authorList>
    </citation>
    <scope>NUCLEOTIDE SEQUENCE [LARGE SCALE GENOMIC DNA]</scope>
    <source>
        <strain>NCIMB 400</strain>
    </source>
</reference>
<gene>
    <name evidence="1" type="primary">kdsB</name>
    <name type="ordered locus">Sfri_1759</name>
</gene>
<dbReference type="EC" id="2.7.7.90" evidence="1"/>
<dbReference type="EMBL" id="CP000447">
    <property type="protein sequence ID" value="ABI71609.1"/>
    <property type="molecule type" value="Genomic_DNA"/>
</dbReference>
<dbReference type="RefSeq" id="WP_011637225.1">
    <property type="nucleotide sequence ID" value="NC_008345.1"/>
</dbReference>
<dbReference type="SMR" id="Q083F6"/>
<dbReference type="STRING" id="318167.Sfri_1759"/>
<dbReference type="KEGG" id="sfr:Sfri_1759"/>
<dbReference type="eggNOG" id="COG1212">
    <property type="taxonomic scope" value="Bacteria"/>
</dbReference>
<dbReference type="HOGENOM" id="CLU_065038_0_1_6"/>
<dbReference type="OrthoDB" id="9815559at2"/>
<dbReference type="UniPathway" id="UPA00030"/>
<dbReference type="Proteomes" id="UP000000684">
    <property type="component" value="Chromosome"/>
</dbReference>
<dbReference type="GO" id="GO:0005829">
    <property type="term" value="C:cytosol"/>
    <property type="evidence" value="ECO:0007669"/>
    <property type="project" value="TreeGrafter"/>
</dbReference>
<dbReference type="GO" id="GO:0008690">
    <property type="term" value="F:3-deoxy-manno-octulosonate cytidylyltransferase activity"/>
    <property type="evidence" value="ECO:0007669"/>
    <property type="project" value="InterPro"/>
</dbReference>
<dbReference type="GO" id="GO:0009103">
    <property type="term" value="P:lipopolysaccharide biosynthetic process"/>
    <property type="evidence" value="ECO:0007669"/>
    <property type="project" value="UniProtKB-UniRule"/>
</dbReference>
<dbReference type="CDD" id="cd02517">
    <property type="entry name" value="CMP-KDO-Synthetase"/>
    <property type="match status" value="1"/>
</dbReference>
<dbReference type="FunFam" id="3.90.550.10:FF:000168">
    <property type="entry name" value="8-amino-3,8-dideoxy-manno-octulosonate cytidylyltransferase"/>
    <property type="match status" value="1"/>
</dbReference>
<dbReference type="Gene3D" id="3.90.550.10">
    <property type="entry name" value="Spore Coat Polysaccharide Biosynthesis Protein SpsA, Chain A"/>
    <property type="match status" value="1"/>
</dbReference>
<dbReference type="HAMAP" id="MF_00057">
    <property type="entry name" value="KdsB"/>
    <property type="match status" value="1"/>
</dbReference>
<dbReference type="InterPro" id="IPR003329">
    <property type="entry name" value="Cytidylyl_trans"/>
</dbReference>
<dbReference type="InterPro" id="IPR004528">
    <property type="entry name" value="KdsB"/>
</dbReference>
<dbReference type="InterPro" id="IPR029044">
    <property type="entry name" value="Nucleotide-diphossugar_trans"/>
</dbReference>
<dbReference type="NCBIfam" id="TIGR00466">
    <property type="entry name" value="kdsB"/>
    <property type="match status" value="1"/>
</dbReference>
<dbReference type="NCBIfam" id="NF003950">
    <property type="entry name" value="PRK05450.1-3"/>
    <property type="match status" value="1"/>
</dbReference>
<dbReference type="NCBIfam" id="NF003952">
    <property type="entry name" value="PRK05450.1-5"/>
    <property type="match status" value="1"/>
</dbReference>
<dbReference type="NCBIfam" id="NF009905">
    <property type="entry name" value="PRK13368.1"/>
    <property type="match status" value="1"/>
</dbReference>
<dbReference type="PANTHER" id="PTHR42866">
    <property type="entry name" value="3-DEOXY-MANNO-OCTULOSONATE CYTIDYLYLTRANSFERASE"/>
    <property type="match status" value="1"/>
</dbReference>
<dbReference type="PANTHER" id="PTHR42866:SF2">
    <property type="entry name" value="3-DEOXY-MANNO-OCTULOSONATE CYTIDYLYLTRANSFERASE, MITOCHONDRIAL"/>
    <property type="match status" value="1"/>
</dbReference>
<dbReference type="Pfam" id="PF02348">
    <property type="entry name" value="CTP_transf_3"/>
    <property type="match status" value="1"/>
</dbReference>
<dbReference type="SUPFAM" id="SSF53448">
    <property type="entry name" value="Nucleotide-diphospho-sugar transferases"/>
    <property type="match status" value="1"/>
</dbReference>